<proteinExistence type="inferred from homology"/>
<protein>
    <recommendedName>
        <fullName evidence="1">4-hydroxy-tetrahydrodipicolinate synthase</fullName>
        <shortName evidence="1">HTPA synthase</shortName>
        <ecNumber evidence="1">4.3.3.7</ecNumber>
    </recommendedName>
</protein>
<name>DAPA_ZYMMO</name>
<gene>
    <name evidence="1" type="primary">dapA</name>
    <name type="ordered locus">ZMO0720</name>
</gene>
<keyword id="KW-0028">Amino-acid biosynthesis</keyword>
<keyword id="KW-0963">Cytoplasm</keyword>
<keyword id="KW-0220">Diaminopimelate biosynthesis</keyword>
<keyword id="KW-0456">Lyase</keyword>
<keyword id="KW-0457">Lysine biosynthesis</keyword>
<keyword id="KW-1185">Reference proteome</keyword>
<keyword id="KW-0704">Schiff base</keyword>
<evidence type="ECO:0000255" key="1">
    <source>
        <dbReference type="HAMAP-Rule" id="MF_00418"/>
    </source>
</evidence>
<evidence type="ECO:0000305" key="2"/>
<accession>Q5NPL6</accession>
<sequence length="291" mass="30999">MFTGSIPALVTPFRNGKFDEVVFRAHVDRMIEGGSSALVPCGTTGESATMTIEEHNYVMAVCIDQTKGRVPVIAGCGSNDTKVSLAHLRHAAKAGAAAGLVVLPYYNKPSQEGLYAHYSYLAENSPIPILIYNVPGRTSSDISVETLARLSRLPAIVGMKDASGHIARVSAQRLACGSDFCQLSGNDDMALAFNAMGGVGCISVTANVAPKLSADFQKACAENRYQDALALQDRLYPLHSALFSDSSPAPVKYALSRLYSDFSPELRLPLVQPSDHSKALVDAALSHARLI</sequence>
<feature type="chain" id="PRO_0000103192" description="4-hydroxy-tetrahydrodipicolinate synthase">
    <location>
        <begin position="1"/>
        <end position="291"/>
    </location>
</feature>
<feature type="active site" description="Proton donor/acceptor" evidence="1">
    <location>
        <position position="132"/>
    </location>
</feature>
<feature type="active site" description="Schiff-base intermediate with substrate" evidence="1">
    <location>
        <position position="160"/>
    </location>
</feature>
<feature type="binding site" evidence="1">
    <location>
        <position position="44"/>
    </location>
    <ligand>
        <name>pyruvate</name>
        <dbReference type="ChEBI" id="CHEBI:15361"/>
    </ligand>
</feature>
<feature type="binding site" evidence="1">
    <location>
        <position position="202"/>
    </location>
    <ligand>
        <name>pyruvate</name>
        <dbReference type="ChEBI" id="CHEBI:15361"/>
    </ligand>
</feature>
<feature type="site" description="Part of a proton relay during catalysis" evidence="1">
    <location>
        <position position="43"/>
    </location>
</feature>
<feature type="site" description="Part of a proton relay during catalysis" evidence="1">
    <location>
        <position position="106"/>
    </location>
</feature>
<dbReference type="EC" id="4.3.3.7" evidence="1"/>
<dbReference type="EMBL" id="AE008692">
    <property type="protein sequence ID" value="AAV89344.1"/>
    <property type="molecule type" value="Genomic_DNA"/>
</dbReference>
<dbReference type="RefSeq" id="WP_011240606.1">
    <property type="nucleotide sequence ID" value="NZ_CP035711.1"/>
</dbReference>
<dbReference type="SMR" id="Q5NPL6"/>
<dbReference type="STRING" id="264203.ZMO0720"/>
<dbReference type="KEGG" id="zmo:ZMO0720"/>
<dbReference type="eggNOG" id="COG0329">
    <property type="taxonomic scope" value="Bacteria"/>
</dbReference>
<dbReference type="HOGENOM" id="CLU_049343_7_0_5"/>
<dbReference type="UniPathway" id="UPA00034">
    <property type="reaction ID" value="UER00017"/>
</dbReference>
<dbReference type="Proteomes" id="UP000001173">
    <property type="component" value="Chromosome"/>
</dbReference>
<dbReference type="GO" id="GO:0005829">
    <property type="term" value="C:cytosol"/>
    <property type="evidence" value="ECO:0007669"/>
    <property type="project" value="TreeGrafter"/>
</dbReference>
<dbReference type="GO" id="GO:0008840">
    <property type="term" value="F:4-hydroxy-tetrahydrodipicolinate synthase activity"/>
    <property type="evidence" value="ECO:0007669"/>
    <property type="project" value="UniProtKB-UniRule"/>
</dbReference>
<dbReference type="GO" id="GO:0019877">
    <property type="term" value="P:diaminopimelate biosynthetic process"/>
    <property type="evidence" value="ECO:0007669"/>
    <property type="project" value="UniProtKB-UniRule"/>
</dbReference>
<dbReference type="GO" id="GO:0009089">
    <property type="term" value="P:lysine biosynthetic process via diaminopimelate"/>
    <property type="evidence" value="ECO:0007669"/>
    <property type="project" value="UniProtKB-UniRule"/>
</dbReference>
<dbReference type="CDD" id="cd00950">
    <property type="entry name" value="DHDPS"/>
    <property type="match status" value="1"/>
</dbReference>
<dbReference type="Gene3D" id="3.20.20.70">
    <property type="entry name" value="Aldolase class I"/>
    <property type="match status" value="1"/>
</dbReference>
<dbReference type="HAMAP" id="MF_00418">
    <property type="entry name" value="DapA"/>
    <property type="match status" value="1"/>
</dbReference>
<dbReference type="InterPro" id="IPR013785">
    <property type="entry name" value="Aldolase_TIM"/>
</dbReference>
<dbReference type="InterPro" id="IPR005263">
    <property type="entry name" value="DapA"/>
</dbReference>
<dbReference type="InterPro" id="IPR002220">
    <property type="entry name" value="DapA-like"/>
</dbReference>
<dbReference type="InterPro" id="IPR020625">
    <property type="entry name" value="Schiff_base-form_aldolases_AS"/>
</dbReference>
<dbReference type="InterPro" id="IPR020624">
    <property type="entry name" value="Schiff_base-form_aldolases_CS"/>
</dbReference>
<dbReference type="NCBIfam" id="TIGR00674">
    <property type="entry name" value="dapA"/>
    <property type="match status" value="1"/>
</dbReference>
<dbReference type="PANTHER" id="PTHR12128:SF66">
    <property type="entry name" value="4-HYDROXY-2-OXOGLUTARATE ALDOLASE, MITOCHONDRIAL"/>
    <property type="match status" value="1"/>
</dbReference>
<dbReference type="PANTHER" id="PTHR12128">
    <property type="entry name" value="DIHYDRODIPICOLINATE SYNTHASE"/>
    <property type="match status" value="1"/>
</dbReference>
<dbReference type="Pfam" id="PF00701">
    <property type="entry name" value="DHDPS"/>
    <property type="match status" value="1"/>
</dbReference>
<dbReference type="PIRSF" id="PIRSF001365">
    <property type="entry name" value="DHDPS"/>
    <property type="match status" value="1"/>
</dbReference>
<dbReference type="PRINTS" id="PR00146">
    <property type="entry name" value="DHPICSNTHASE"/>
</dbReference>
<dbReference type="SMART" id="SM01130">
    <property type="entry name" value="DHDPS"/>
    <property type="match status" value="1"/>
</dbReference>
<dbReference type="SUPFAM" id="SSF51569">
    <property type="entry name" value="Aldolase"/>
    <property type="match status" value="1"/>
</dbReference>
<dbReference type="PROSITE" id="PS00665">
    <property type="entry name" value="DHDPS_1"/>
    <property type="match status" value="1"/>
</dbReference>
<dbReference type="PROSITE" id="PS00666">
    <property type="entry name" value="DHDPS_2"/>
    <property type="match status" value="1"/>
</dbReference>
<organism>
    <name type="scientific">Zymomonas mobilis subsp. mobilis (strain ATCC 31821 / ZM4 / CP4)</name>
    <dbReference type="NCBI Taxonomy" id="264203"/>
    <lineage>
        <taxon>Bacteria</taxon>
        <taxon>Pseudomonadati</taxon>
        <taxon>Pseudomonadota</taxon>
        <taxon>Alphaproteobacteria</taxon>
        <taxon>Sphingomonadales</taxon>
        <taxon>Zymomonadaceae</taxon>
        <taxon>Zymomonas</taxon>
    </lineage>
</organism>
<comment type="function">
    <text evidence="1">Catalyzes the condensation of (S)-aspartate-beta-semialdehyde [(S)-ASA] and pyruvate to 4-hydroxy-tetrahydrodipicolinate (HTPA).</text>
</comment>
<comment type="catalytic activity">
    <reaction evidence="1">
        <text>L-aspartate 4-semialdehyde + pyruvate = (2S,4S)-4-hydroxy-2,3,4,5-tetrahydrodipicolinate + H2O + H(+)</text>
        <dbReference type="Rhea" id="RHEA:34171"/>
        <dbReference type="ChEBI" id="CHEBI:15361"/>
        <dbReference type="ChEBI" id="CHEBI:15377"/>
        <dbReference type="ChEBI" id="CHEBI:15378"/>
        <dbReference type="ChEBI" id="CHEBI:67139"/>
        <dbReference type="ChEBI" id="CHEBI:537519"/>
        <dbReference type="EC" id="4.3.3.7"/>
    </reaction>
</comment>
<comment type="pathway">
    <text evidence="1">Amino-acid biosynthesis; L-lysine biosynthesis via DAP pathway; (S)-tetrahydrodipicolinate from L-aspartate: step 3/4.</text>
</comment>
<comment type="subunit">
    <text evidence="1">Homotetramer; dimer of dimers.</text>
</comment>
<comment type="subcellular location">
    <subcellularLocation>
        <location evidence="1">Cytoplasm</location>
    </subcellularLocation>
</comment>
<comment type="similarity">
    <text evidence="1">Belongs to the DapA family.</text>
</comment>
<comment type="caution">
    <text evidence="2">Was originally thought to be a dihydrodipicolinate synthase (DHDPS), catalyzing the condensation of (S)-aspartate-beta-semialdehyde [(S)-ASA] and pyruvate to dihydrodipicolinate (DHDP). However, it was shown in E.coli that the product of the enzymatic reaction is not dihydrodipicolinate but in fact (4S)-4-hydroxy-2,3,4,5-tetrahydro-(2S)-dipicolinic acid (HTPA), and that the consecutive dehydration reaction leading to DHDP is not spontaneous but catalyzed by DapB.</text>
</comment>
<reference key="1">
    <citation type="journal article" date="2005" name="Nat. Biotechnol.">
        <title>The genome sequence of the ethanologenic bacterium Zymomonas mobilis ZM4.</title>
        <authorList>
            <person name="Seo J.-S."/>
            <person name="Chong H."/>
            <person name="Park H.S."/>
            <person name="Yoon K.-O."/>
            <person name="Jung C."/>
            <person name="Kim J.J."/>
            <person name="Hong J.H."/>
            <person name="Kim H."/>
            <person name="Kim J.-H."/>
            <person name="Kil J.-I."/>
            <person name="Park C.J."/>
            <person name="Oh H.-M."/>
            <person name="Lee J.-S."/>
            <person name="Jin S.-J."/>
            <person name="Um H.-W."/>
            <person name="Lee H.-J."/>
            <person name="Oh S.-J."/>
            <person name="Kim J.Y."/>
            <person name="Kang H.L."/>
            <person name="Lee S.Y."/>
            <person name="Lee K.J."/>
            <person name="Kang H.S."/>
        </authorList>
    </citation>
    <scope>NUCLEOTIDE SEQUENCE [LARGE SCALE GENOMIC DNA]</scope>
    <source>
        <strain>ATCC 31821 / ZM4 / CP4</strain>
    </source>
</reference>